<reference key="1">
    <citation type="journal article" date="2007" name="J. Bacteriol.">
        <title>The complete genome sequence of the lactic acid bacterial paradigm Lactococcus lactis subsp. cremoris MG1363.</title>
        <authorList>
            <person name="Wegmann U."/>
            <person name="O'Connell-Motherway M."/>
            <person name="Zomer A."/>
            <person name="Buist G."/>
            <person name="Shearman C."/>
            <person name="Canchaya C."/>
            <person name="Ventura M."/>
            <person name="Goesmann A."/>
            <person name="Gasson M.J."/>
            <person name="Kuipers O.P."/>
            <person name="van Sinderen D."/>
            <person name="Kok J."/>
        </authorList>
    </citation>
    <scope>NUCLEOTIDE SEQUENCE [LARGE SCALE GENOMIC DNA]</scope>
    <source>
        <strain>MG1363</strain>
    </source>
</reference>
<feature type="chain" id="PRO_1000050706" description="Large ribosomal subunit protein bL35">
    <location>
        <begin position="1"/>
        <end position="66"/>
    </location>
</feature>
<feature type="region of interest" description="Disordered" evidence="2">
    <location>
        <begin position="1"/>
        <end position="21"/>
    </location>
</feature>
<feature type="compositionally biased region" description="Basic residues" evidence="2">
    <location>
        <begin position="1"/>
        <end position="16"/>
    </location>
</feature>
<comment type="similarity">
    <text evidence="1">Belongs to the bacterial ribosomal protein bL35 family.</text>
</comment>
<accession>A2RMR2</accession>
<organism>
    <name type="scientific">Lactococcus lactis subsp. cremoris (strain MG1363)</name>
    <dbReference type="NCBI Taxonomy" id="416870"/>
    <lineage>
        <taxon>Bacteria</taxon>
        <taxon>Bacillati</taxon>
        <taxon>Bacillota</taxon>
        <taxon>Bacilli</taxon>
        <taxon>Lactobacillales</taxon>
        <taxon>Streptococcaceae</taxon>
        <taxon>Lactococcus</taxon>
        <taxon>Lactococcus cremoris subsp. cremoris</taxon>
    </lineage>
</organism>
<keyword id="KW-0002">3D-structure</keyword>
<keyword id="KW-0687">Ribonucleoprotein</keyword>
<keyword id="KW-0689">Ribosomal protein</keyword>
<gene>
    <name evidence="1" type="primary">rpmI</name>
    <name type="ordered locus">llmg_2030</name>
</gene>
<proteinExistence type="evidence at protein level"/>
<dbReference type="EMBL" id="AM406671">
    <property type="protein sequence ID" value="CAL98598.1"/>
    <property type="molecule type" value="Genomic_DNA"/>
</dbReference>
<dbReference type="RefSeq" id="WP_011676854.1">
    <property type="nucleotide sequence ID" value="NC_009004.1"/>
</dbReference>
<dbReference type="PDB" id="5MYJ">
    <property type="method" value="EM"/>
    <property type="resolution" value="5.60 A"/>
    <property type="chains" value="B7=1-66"/>
</dbReference>
<dbReference type="PDBsum" id="5MYJ"/>
<dbReference type="EMDB" id="EMD-3581"/>
<dbReference type="SMR" id="A2RMR2"/>
<dbReference type="STRING" id="416870.llmg_2030"/>
<dbReference type="GeneID" id="61110173"/>
<dbReference type="KEGG" id="llm:llmg_2030"/>
<dbReference type="eggNOG" id="COG0291">
    <property type="taxonomic scope" value="Bacteria"/>
</dbReference>
<dbReference type="HOGENOM" id="CLU_169643_3_0_9"/>
<dbReference type="OrthoDB" id="47476at2"/>
<dbReference type="PhylomeDB" id="A2RMR2"/>
<dbReference type="Proteomes" id="UP000000364">
    <property type="component" value="Chromosome"/>
</dbReference>
<dbReference type="GO" id="GO:0022625">
    <property type="term" value="C:cytosolic large ribosomal subunit"/>
    <property type="evidence" value="ECO:0007669"/>
    <property type="project" value="TreeGrafter"/>
</dbReference>
<dbReference type="GO" id="GO:0003735">
    <property type="term" value="F:structural constituent of ribosome"/>
    <property type="evidence" value="ECO:0007669"/>
    <property type="project" value="InterPro"/>
</dbReference>
<dbReference type="GO" id="GO:0006412">
    <property type="term" value="P:translation"/>
    <property type="evidence" value="ECO:0007669"/>
    <property type="project" value="UniProtKB-UniRule"/>
</dbReference>
<dbReference type="FunFam" id="4.10.410.60:FF:000001">
    <property type="entry name" value="50S ribosomal protein L35"/>
    <property type="match status" value="1"/>
</dbReference>
<dbReference type="Gene3D" id="4.10.410.60">
    <property type="match status" value="1"/>
</dbReference>
<dbReference type="HAMAP" id="MF_00514">
    <property type="entry name" value="Ribosomal_bL35"/>
    <property type="match status" value="1"/>
</dbReference>
<dbReference type="InterPro" id="IPR001706">
    <property type="entry name" value="Ribosomal_bL35"/>
</dbReference>
<dbReference type="InterPro" id="IPR021137">
    <property type="entry name" value="Ribosomal_bL35-like"/>
</dbReference>
<dbReference type="InterPro" id="IPR018265">
    <property type="entry name" value="Ribosomal_bL35_CS"/>
</dbReference>
<dbReference type="InterPro" id="IPR037229">
    <property type="entry name" value="Ribosomal_bL35_sf"/>
</dbReference>
<dbReference type="NCBIfam" id="TIGR00001">
    <property type="entry name" value="rpmI_bact"/>
    <property type="match status" value="1"/>
</dbReference>
<dbReference type="PANTHER" id="PTHR33343">
    <property type="entry name" value="54S RIBOSOMAL PROTEIN BL35M"/>
    <property type="match status" value="1"/>
</dbReference>
<dbReference type="PANTHER" id="PTHR33343:SF1">
    <property type="entry name" value="LARGE RIBOSOMAL SUBUNIT PROTEIN BL35M"/>
    <property type="match status" value="1"/>
</dbReference>
<dbReference type="Pfam" id="PF01632">
    <property type="entry name" value="Ribosomal_L35p"/>
    <property type="match status" value="1"/>
</dbReference>
<dbReference type="PRINTS" id="PR00064">
    <property type="entry name" value="RIBOSOMALL35"/>
</dbReference>
<dbReference type="SUPFAM" id="SSF143034">
    <property type="entry name" value="L35p-like"/>
    <property type="match status" value="1"/>
</dbReference>
<dbReference type="PROSITE" id="PS00936">
    <property type="entry name" value="RIBOSOMAL_L35"/>
    <property type="match status" value="1"/>
</dbReference>
<name>RL35_LACLM</name>
<protein>
    <recommendedName>
        <fullName evidence="1">Large ribosomal subunit protein bL35</fullName>
    </recommendedName>
    <alternativeName>
        <fullName evidence="3">50S ribosomal protein L35</fullName>
    </alternativeName>
</protein>
<evidence type="ECO:0000255" key="1">
    <source>
        <dbReference type="HAMAP-Rule" id="MF_00514"/>
    </source>
</evidence>
<evidence type="ECO:0000256" key="2">
    <source>
        <dbReference type="SAM" id="MobiDB-lite"/>
    </source>
</evidence>
<evidence type="ECO:0000305" key="3"/>
<sequence length="66" mass="7818">MPKQKTHRASAKRFKRTGNGGLKRFRAYTSHRFHGKSVKQRRQLRKASMVSKGDFKRIRRMVATMK</sequence>